<accession>A3LYF7</accession>
<keyword id="KW-0010">Activator</keyword>
<keyword id="KW-0175">Coiled coil</keyword>
<keyword id="KW-0539">Nucleus</keyword>
<keyword id="KW-1185">Reference proteome</keyword>
<keyword id="KW-0804">Transcription</keyword>
<keyword id="KW-0805">Transcription regulation</keyword>
<reference key="1">
    <citation type="journal article" date="2007" name="Nat. Biotechnol.">
        <title>Genome sequence of the lignocellulose-bioconverting and xylose-fermenting yeast Pichia stipitis.</title>
        <authorList>
            <person name="Jeffries T.W."/>
            <person name="Grigoriev I.V."/>
            <person name="Grimwood J."/>
            <person name="Laplaza J.M."/>
            <person name="Aerts A."/>
            <person name="Salamov A."/>
            <person name="Schmutz J."/>
            <person name="Lindquist E."/>
            <person name="Dehal P."/>
            <person name="Shapiro H."/>
            <person name="Jin Y.-S."/>
            <person name="Passoth V."/>
            <person name="Richardson P.M."/>
        </authorList>
    </citation>
    <scope>NUCLEOTIDE SEQUENCE [LARGE SCALE GENOMIC DNA]</scope>
    <source>
        <strain>ATCC 58785 / CBS 6054 / NBRC 10063 / NRRL Y-11545</strain>
    </source>
</reference>
<gene>
    <name type="primary">MED4</name>
    <name type="ORF">PICST_62182</name>
</gene>
<evidence type="ECO:0000250" key="1"/>
<evidence type="ECO:0000255" key="2"/>
<evidence type="ECO:0000256" key="3">
    <source>
        <dbReference type="SAM" id="MobiDB-lite"/>
    </source>
</evidence>
<evidence type="ECO:0000305" key="4"/>
<proteinExistence type="inferred from homology"/>
<name>MED4_PICST</name>
<protein>
    <recommendedName>
        <fullName>Mediator of RNA polymerase II transcription subunit 4</fullName>
    </recommendedName>
    <alternativeName>
        <fullName>Mediator complex subunit 4</fullName>
    </alternativeName>
</protein>
<dbReference type="EMBL" id="CP000500">
    <property type="protein sequence ID" value="ABN67972.2"/>
    <property type="molecule type" value="Genomic_DNA"/>
</dbReference>
<dbReference type="RefSeq" id="XP_001386001.2">
    <property type="nucleotide sequence ID" value="XM_001385964.1"/>
</dbReference>
<dbReference type="SMR" id="A3LYF7"/>
<dbReference type="FunCoup" id="A3LYF7">
    <property type="interactions" value="262"/>
</dbReference>
<dbReference type="STRING" id="322104.A3LYF7"/>
<dbReference type="GeneID" id="4840161"/>
<dbReference type="KEGG" id="pic:PICST_62182"/>
<dbReference type="eggNOG" id="ENOG502RXM0">
    <property type="taxonomic scope" value="Eukaryota"/>
</dbReference>
<dbReference type="HOGENOM" id="CLU_071875_0_0_1"/>
<dbReference type="InParanoid" id="A3LYF7"/>
<dbReference type="OMA" id="PFQIHPN"/>
<dbReference type="OrthoDB" id="1929813at2759"/>
<dbReference type="Proteomes" id="UP000002258">
    <property type="component" value="Chromosome 6"/>
</dbReference>
<dbReference type="GO" id="GO:0070847">
    <property type="term" value="C:core mediator complex"/>
    <property type="evidence" value="ECO:0007669"/>
    <property type="project" value="TreeGrafter"/>
</dbReference>
<dbReference type="GO" id="GO:0016592">
    <property type="term" value="C:mediator complex"/>
    <property type="evidence" value="ECO:0007669"/>
    <property type="project" value="InterPro"/>
</dbReference>
<dbReference type="GO" id="GO:0003712">
    <property type="term" value="F:transcription coregulator activity"/>
    <property type="evidence" value="ECO:0007669"/>
    <property type="project" value="InterPro"/>
</dbReference>
<dbReference type="GO" id="GO:0006357">
    <property type="term" value="P:regulation of transcription by RNA polymerase II"/>
    <property type="evidence" value="ECO:0007669"/>
    <property type="project" value="InterPro"/>
</dbReference>
<dbReference type="InterPro" id="IPR019258">
    <property type="entry name" value="Mediator_Med4"/>
</dbReference>
<dbReference type="PANTHER" id="PTHR13208">
    <property type="entry name" value="MEDIATOR OF RNA POLYMERASE II TRANSCRIPTION SUBUNIT 4"/>
    <property type="match status" value="1"/>
</dbReference>
<dbReference type="PANTHER" id="PTHR13208:SF2">
    <property type="entry name" value="MEDIATOR OF RNA POLYMERASE II TRANSCRIPTION SUBUNIT 4"/>
    <property type="match status" value="1"/>
</dbReference>
<dbReference type="Pfam" id="PF10018">
    <property type="entry name" value="Med4"/>
    <property type="match status" value="1"/>
</dbReference>
<sequence>MFPHKKNDPLKSLPISRVGSSQRLNQHISSIPSTPNYVASSLNPVRNLPVSSGSIKSKITTKAALDKFEQLPIVKQVGAFEDTLNAISDNISQFKEGQLHANVEKIIAINDDLKSKIEELDRHRRLGENIKELEAESSNLDNTSKYILKELISYRNELRALPRLPASASKGSGDTVEIEDILKYAMKLAKFTKAPATSASMPFQIHPNNYVWPAEDALRRGMLAASSLNPDEIIANELGTTEEEKIQEKKDEQVKKADKQQDTGIRRGSFGDYGSSSSGKKKEEQSAQLDLDLFDSEDEFSD</sequence>
<organism>
    <name type="scientific">Scheffersomyces stipitis (strain ATCC 58785 / CBS 6054 / NBRC 10063 / NRRL Y-11545)</name>
    <name type="common">Yeast</name>
    <name type="synonym">Pichia stipitis</name>
    <dbReference type="NCBI Taxonomy" id="322104"/>
    <lineage>
        <taxon>Eukaryota</taxon>
        <taxon>Fungi</taxon>
        <taxon>Dikarya</taxon>
        <taxon>Ascomycota</taxon>
        <taxon>Saccharomycotina</taxon>
        <taxon>Pichiomycetes</taxon>
        <taxon>Debaryomycetaceae</taxon>
        <taxon>Scheffersomyces</taxon>
    </lineage>
</organism>
<feature type="chain" id="PRO_0000302080" description="Mediator of RNA polymerase II transcription subunit 4">
    <location>
        <begin position="1"/>
        <end position="302"/>
    </location>
</feature>
<feature type="region of interest" description="Disordered" evidence="3">
    <location>
        <begin position="239"/>
        <end position="302"/>
    </location>
</feature>
<feature type="coiled-coil region" evidence="2">
    <location>
        <begin position="98"/>
        <end position="145"/>
    </location>
</feature>
<feature type="compositionally biased region" description="Basic and acidic residues" evidence="3">
    <location>
        <begin position="242"/>
        <end position="265"/>
    </location>
</feature>
<feature type="compositionally biased region" description="Low complexity" evidence="3">
    <location>
        <begin position="268"/>
        <end position="278"/>
    </location>
</feature>
<feature type="compositionally biased region" description="Acidic residues" evidence="3">
    <location>
        <begin position="292"/>
        <end position="302"/>
    </location>
</feature>
<comment type="function">
    <text evidence="1">Component of the Mediator complex, a coactivator involved in the regulated transcription of nearly all RNA polymerase II-dependent genes. Mediator functions as a bridge to convey information from gene-specific regulatory proteins to the basal RNA polymerase II transcription machinery. Mediator is recruited to promoters by direct interactions with regulatory proteins and serves as a scaffold for the assembly of a functional preinitiation complex with RNA polymerase II and the general transcription factors (By similarity).</text>
</comment>
<comment type="subunit">
    <text evidence="1">Component of the Mediator complex.</text>
</comment>
<comment type="subcellular location">
    <subcellularLocation>
        <location evidence="1">Nucleus</location>
    </subcellularLocation>
</comment>
<comment type="similarity">
    <text evidence="4">Belongs to the Mediator complex subunit 4 family.</text>
</comment>